<keyword id="KW-0450">Lipoyl</keyword>
<keyword id="KW-1185">Reference proteome</keyword>
<dbReference type="EMBL" id="CP000830">
    <property type="protein sequence ID" value="ABV94414.1"/>
    <property type="molecule type" value="Genomic_DNA"/>
</dbReference>
<dbReference type="RefSeq" id="WP_012179342.1">
    <property type="nucleotide sequence ID" value="NC_009952.1"/>
</dbReference>
<dbReference type="SMR" id="A8LIH3"/>
<dbReference type="STRING" id="398580.Dshi_2681"/>
<dbReference type="KEGG" id="dsh:Dshi_2681"/>
<dbReference type="eggNOG" id="COG0509">
    <property type="taxonomic scope" value="Bacteria"/>
</dbReference>
<dbReference type="HOGENOM" id="CLU_097408_2_2_5"/>
<dbReference type="OrthoDB" id="9796712at2"/>
<dbReference type="Proteomes" id="UP000006833">
    <property type="component" value="Chromosome"/>
</dbReference>
<dbReference type="GO" id="GO:0005829">
    <property type="term" value="C:cytosol"/>
    <property type="evidence" value="ECO:0007669"/>
    <property type="project" value="TreeGrafter"/>
</dbReference>
<dbReference type="GO" id="GO:0005960">
    <property type="term" value="C:glycine cleavage complex"/>
    <property type="evidence" value="ECO:0007669"/>
    <property type="project" value="InterPro"/>
</dbReference>
<dbReference type="GO" id="GO:0019464">
    <property type="term" value="P:glycine decarboxylation via glycine cleavage system"/>
    <property type="evidence" value="ECO:0007669"/>
    <property type="project" value="UniProtKB-UniRule"/>
</dbReference>
<dbReference type="CDD" id="cd06848">
    <property type="entry name" value="GCS_H"/>
    <property type="match status" value="1"/>
</dbReference>
<dbReference type="Gene3D" id="2.40.50.100">
    <property type="match status" value="1"/>
</dbReference>
<dbReference type="HAMAP" id="MF_00272">
    <property type="entry name" value="GcvH"/>
    <property type="match status" value="1"/>
</dbReference>
<dbReference type="InterPro" id="IPR003016">
    <property type="entry name" value="2-oxoA_DH_lipoyl-BS"/>
</dbReference>
<dbReference type="InterPro" id="IPR000089">
    <property type="entry name" value="Biotin_lipoyl"/>
</dbReference>
<dbReference type="InterPro" id="IPR002930">
    <property type="entry name" value="GCV_H"/>
</dbReference>
<dbReference type="InterPro" id="IPR033753">
    <property type="entry name" value="GCV_H/Fam206"/>
</dbReference>
<dbReference type="InterPro" id="IPR017453">
    <property type="entry name" value="GCV_H_sub"/>
</dbReference>
<dbReference type="InterPro" id="IPR011053">
    <property type="entry name" value="Single_hybrid_motif"/>
</dbReference>
<dbReference type="NCBIfam" id="TIGR00527">
    <property type="entry name" value="gcvH"/>
    <property type="match status" value="1"/>
</dbReference>
<dbReference type="NCBIfam" id="NF002270">
    <property type="entry name" value="PRK01202.1"/>
    <property type="match status" value="1"/>
</dbReference>
<dbReference type="PANTHER" id="PTHR11715">
    <property type="entry name" value="GLYCINE CLEAVAGE SYSTEM H PROTEIN"/>
    <property type="match status" value="1"/>
</dbReference>
<dbReference type="PANTHER" id="PTHR11715:SF3">
    <property type="entry name" value="GLYCINE CLEAVAGE SYSTEM H PROTEIN-RELATED"/>
    <property type="match status" value="1"/>
</dbReference>
<dbReference type="Pfam" id="PF01597">
    <property type="entry name" value="GCV_H"/>
    <property type="match status" value="1"/>
</dbReference>
<dbReference type="SUPFAM" id="SSF51230">
    <property type="entry name" value="Single hybrid motif"/>
    <property type="match status" value="1"/>
</dbReference>
<dbReference type="PROSITE" id="PS50968">
    <property type="entry name" value="BIOTINYL_LIPOYL"/>
    <property type="match status" value="1"/>
</dbReference>
<dbReference type="PROSITE" id="PS00189">
    <property type="entry name" value="LIPOYL"/>
    <property type="match status" value="1"/>
</dbReference>
<sequence length="122" mass="13197">MPTTYYTDDHEWIEVEDDTATIGITKHAAEQLGEVVFIELQPEGETFVKGDEIGVVESVKAASDIFAPVTGEILEANAALVETPAELNEDPEGNSWLYKIKLSDPGELSELLDAEGYAALIG</sequence>
<name>GCSH_DINSH</name>
<proteinExistence type="inferred from homology"/>
<protein>
    <recommendedName>
        <fullName evidence="1">Glycine cleavage system H protein</fullName>
    </recommendedName>
</protein>
<accession>A8LIH3</accession>
<evidence type="ECO:0000255" key="1">
    <source>
        <dbReference type="HAMAP-Rule" id="MF_00272"/>
    </source>
</evidence>
<evidence type="ECO:0000255" key="2">
    <source>
        <dbReference type="PROSITE-ProRule" id="PRU01066"/>
    </source>
</evidence>
<reference key="1">
    <citation type="journal article" date="2010" name="ISME J.">
        <title>The complete genome sequence of the algal symbiont Dinoroseobacter shibae: a hitchhiker's guide to life in the sea.</title>
        <authorList>
            <person name="Wagner-Dobler I."/>
            <person name="Ballhausen B."/>
            <person name="Berger M."/>
            <person name="Brinkhoff T."/>
            <person name="Buchholz I."/>
            <person name="Bunk B."/>
            <person name="Cypionka H."/>
            <person name="Daniel R."/>
            <person name="Drepper T."/>
            <person name="Gerdts G."/>
            <person name="Hahnke S."/>
            <person name="Han C."/>
            <person name="Jahn D."/>
            <person name="Kalhoefer D."/>
            <person name="Kiss H."/>
            <person name="Klenk H.P."/>
            <person name="Kyrpides N."/>
            <person name="Liebl W."/>
            <person name="Liesegang H."/>
            <person name="Meincke L."/>
            <person name="Pati A."/>
            <person name="Petersen J."/>
            <person name="Piekarski T."/>
            <person name="Pommerenke C."/>
            <person name="Pradella S."/>
            <person name="Pukall R."/>
            <person name="Rabus R."/>
            <person name="Stackebrandt E."/>
            <person name="Thole S."/>
            <person name="Thompson L."/>
            <person name="Tielen P."/>
            <person name="Tomasch J."/>
            <person name="von Jan M."/>
            <person name="Wanphrut N."/>
            <person name="Wichels A."/>
            <person name="Zech H."/>
            <person name="Simon M."/>
        </authorList>
    </citation>
    <scope>NUCLEOTIDE SEQUENCE [LARGE SCALE GENOMIC DNA]</scope>
    <source>
        <strain>DSM 16493 / NCIMB 14021 / DFL 12</strain>
    </source>
</reference>
<gene>
    <name evidence="1" type="primary">gcvH</name>
    <name type="ordered locus">Dshi_2681</name>
</gene>
<comment type="function">
    <text evidence="1">The glycine cleavage system catalyzes the degradation of glycine. The H protein shuttles the methylamine group of glycine from the P protein to the T protein.</text>
</comment>
<comment type="cofactor">
    <cofactor evidence="1">
        <name>(R)-lipoate</name>
        <dbReference type="ChEBI" id="CHEBI:83088"/>
    </cofactor>
    <text evidence="1">Binds 1 lipoyl cofactor covalently.</text>
</comment>
<comment type="subunit">
    <text evidence="1">The glycine cleavage system is composed of four proteins: P, T, L and H.</text>
</comment>
<comment type="similarity">
    <text evidence="1">Belongs to the GcvH family.</text>
</comment>
<organism>
    <name type="scientific">Dinoroseobacter shibae (strain DSM 16493 / NCIMB 14021 / DFL 12)</name>
    <dbReference type="NCBI Taxonomy" id="398580"/>
    <lineage>
        <taxon>Bacteria</taxon>
        <taxon>Pseudomonadati</taxon>
        <taxon>Pseudomonadota</taxon>
        <taxon>Alphaproteobacteria</taxon>
        <taxon>Rhodobacterales</taxon>
        <taxon>Roseobacteraceae</taxon>
        <taxon>Dinoroseobacter</taxon>
    </lineage>
</organism>
<feature type="chain" id="PRO_1000078730" description="Glycine cleavage system H protein">
    <location>
        <begin position="1"/>
        <end position="122"/>
    </location>
</feature>
<feature type="domain" description="Lipoyl-binding" evidence="2">
    <location>
        <begin position="19"/>
        <end position="101"/>
    </location>
</feature>
<feature type="modified residue" description="N6-lipoyllysine" evidence="1">
    <location>
        <position position="60"/>
    </location>
</feature>